<accession>P0AE40</accession>
<accession>P77742</accession>
<name>YPDB_ECO57</name>
<protein>
    <recommendedName>
        <fullName evidence="2">Transcriptional regulatory protein YpdB</fullName>
    </recommendedName>
</protein>
<sequence length="244" mass="28721">MKVIIVEDEFLAQQELSWLIKEHSQMEIVGTFDDGLDVLKFLQHNRVDAIFLDINIPSLDGVLLAQNISQFAHKPFIVFITAWKEHAVEAFELEAFDYILKPYQESRITGMLQKLEAAWQQQQTSSTPAATVTRENDTINLVKDERIIVTPINDIYYAEAHEKMTFVYTRRESYVMPMNITEFCSKLPPSHFFRCHRSFCVNLNKIREIEPWFNNTYILRLKDLDFEVPVSRSKVKEFRQLMHL</sequence>
<comment type="function">
    <text evidence="2">Member of the two-component regulatory system YpdA/YpdB. YpdB regulates expression of yhjX by binding to its promoter region.</text>
</comment>
<comment type="subcellular location">
    <subcellularLocation>
        <location evidence="1">Cytoplasm</location>
    </subcellularLocation>
</comment>
<comment type="PTM">
    <text evidence="1">Phosphorylated by YpdA.</text>
</comment>
<feature type="chain" id="PRO_0000081382" description="Transcriptional regulatory protein YpdB">
    <location>
        <begin position="1"/>
        <end position="244"/>
    </location>
</feature>
<feature type="domain" description="Response regulatory" evidence="4">
    <location>
        <begin position="2"/>
        <end position="116"/>
    </location>
</feature>
<feature type="domain" description="HTH LytTR-type" evidence="3">
    <location>
        <begin position="139"/>
        <end position="244"/>
    </location>
</feature>
<feature type="modified residue" description="4-aspartylphosphate" evidence="4">
    <location>
        <position position="53"/>
    </location>
</feature>
<gene>
    <name type="primary">ypdB</name>
    <name type="ordered locus">Z3646</name>
    <name type="ordered locus">ECs3261</name>
</gene>
<organism>
    <name type="scientific">Escherichia coli O157:H7</name>
    <dbReference type="NCBI Taxonomy" id="83334"/>
    <lineage>
        <taxon>Bacteria</taxon>
        <taxon>Pseudomonadati</taxon>
        <taxon>Pseudomonadota</taxon>
        <taxon>Gammaproteobacteria</taxon>
        <taxon>Enterobacterales</taxon>
        <taxon>Enterobacteriaceae</taxon>
        <taxon>Escherichia</taxon>
    </lineage>
</organism>
<dbReference type="EMBL" id="AE005174">
    <property type="protein sequence ID" value="AAG57507.1"/>
    <property type="molecule type" value="Genomic_DNA"/>
</dbReference>
<dbReference type="EMBL" id="BA000007">
    <property type="protein sequence ID" value="BAB36684.1"/>
    <property type="molecule type" value="Genomic_DNA"/>
</dbReference>
<dbReference type="PIR" id="E91036">
    <property type="entry name" value="E91036"/>
</dbReference>
<dbReference type="PIR" id="G85880">
    <property type="entry name" value="G85880"/>
</dbReference>
<dbReference type="RefSeq" id="NP_311288.1">
    <property type="nucleotide sequence ID" value="NC_002695.1"/>
</dbReference>
<dbReference type="RefSeq" id="WP_001295458.1">
    <property type="nucleotide sequence ID" value="NZ_VOAI01000001.1"/>
</dbReference>
<dbReference type="SMR" id="P0AE40"/>
<dbReference type="STRING" id="155864.Z3646"/>
<dbReference type="GeneID" id="915637"/>
<dbReference type="GeneID" id="93774747"/>
<dbReference type="KEGG" id="ece:Z3646"/>
<dbReference type="KEGG" id="ecs:ECs_3261"/>
<dbReference type="PATRIC" id="fig|386585.9.peg.3405"/>
<dbReference type="eggNOG" id="COG3279">
    <property type="taxonomic scope" value="Bacteria"/>
</dbReference>
<dbReference type="HOGENOM" id="CLU_000445_14_1_6"/>
<dbReference type="OMA" id="HEDFAVQ"/>
<dbReference type="Proteomes" id="UP000000558">
    <property type="component" value="Chromosome"/>
</dbReference>
<dbReference type="Proteomes" id="UP000002519">
    <property type="component" value="Chromosome"/>
</dbReference>
<dbReference type="GO" id="GO:0005737">
    <property type="term" value="C:cytoplasm"/>
    <property type="evidence" value="ECO:0007669"/>
    <property type="project" value="UniProtKB-SubCell"/>
</dbReference>
<dbReference type="GO" id="GO:0003677">
    <property type="term" value="F:DNA binding"/>
    <property type="evidence" value="ECO:0007669"/>
    <property type="project" value="UniProtKB-KW"/>
</dbReference>
<dbReference type="GO" id="GO:0000156">
    <property type="term" value="F:phosphorelay response regulator activity"/>
    <property type="evidence" value="ECO:0007669"/>
    <property type="project" value="InterPro"/>
</dbReference>
<dbReference type="CDD" id="cd17532">
    <property type="entry name" value="REC_LytTR_AlgR-like"/>
    <property type="match status" value="1"/>
</dbReference>
<dbReference type="FunFam" id="2.20.25.10:FF:000010">
    <property type="entry name" value="Two-component system response regulator"/>
    <property type="match status" value="1"/>
</dbReference>
<dbReference type="FunFam" id="2.40.50.40:FF:000013">
    <property type="entry name" value="Two-component system response regulator"/>
    <property type="match status" value="1"/>
</dbReference>
<dbReference type="FunFam" id="3.40.50.2300:FF:000104">
    <property type="entry name" value="Two-component system response regulator"/>
    <property type="match status" value="1"/>
</dbReference>
<dbReference type="Gene3D" id="2.20.25.10">
    <property type="match status" value="1"/>
</dbReference>
<dbReference type="Gene3D" id="2.40.50.40">
    <property type="match status" value="1"/>
</dbReference>
<dbReference type="Gene3D" id="3.40.50.2300">
    <property type="match status" value="1"/>
</dbReference>
<dbReference type="InterPro" id="IPR011006">
    <property type="entry name" value="CheY-like_superfamily"/>
</dbReference>
<dbReference type="InterPro" id="IPR046947">
    <property type="entry name" value="LytR-like"/>
</dbReference>
<dbReference type="InterPro" id="IPR007492">
    <property type="entry name" value="LytTR_DNA-bd_dom"/>
</dbReference>
<dbReference type="InterPro" id="IPR001789">
    <property type="entry name" value="Sig_transdc_resp-reg_receiver"/>
</dbReference>
<dbReference type="PANTHER" id="PTHR37299:SF1">
    <property type="entry name" value="STAGE 0 SPORULATION PROTEIN A HOMOLOG"/>
    <property type="match status" value="1"/>
</dbReference>
<dbReference type="PANTHER" id="PTHR37299">
    <property type="entry name" value="TRANSCRIPTIONAL REGULATOR-RELATED"/>
    <property type="match status" value="1"/>
</dbReference>
<dbReference type="Pfam" id="PF04397">
    <property type="entry name" value="LytTR"/>
    <property type="match status" value="1"/>
</dbReference>
<dbReference type="Pfam" id="PF00072">
    <property type="entry name" value="Response_reg"/>
    <property type="match status" value="1"/>
</dbReference>
<dbReference type="SMART" id="SM00850">
    <property type="entry name" value="LytTR"/>
    <property type="match status" value="1"/>
</dbReference>
<dbReference type="SMART" id="SM00448">
    <property type="entry name" value="REC"/>
    <property type="match status" value="1"/>
</dbReference>
<dbReference type="SUPFAM" id="SSF52172">
    <property type="entry name" value="CheY-like"/>
    <property type="match status" value="1"/>
</dbReference>
<dbReference type="PROSITE" id="PS50930">
    <property type="entry name" value="HTH_LYTTR"/>
    <property type="match status" value="1"/>
</dbReference>
<dbReference type="PROSITE" id="PS50110">
    <property type="entry name" value="RESPONSE_REGULATORY"/>
    <property type="match status" value="1"/>
</dbReference>
<proteinExistence type="inferred from homology"/>
<reference key="1">
    <citation type="journal article" date="2001" name="Nature">
        <title>Genome sequence of enterohaemorrhagic Escherichia coli O157:H7.</title>
        <authorList>
            <person name="Perna N.T."/>
            <person name="Plunkett G. III"/>
            <person name="Burland V."/>
            <person name="Mau B."/>
            <person name="Glasner J.D."/>
            <person name="Rose D.J."/>
            <person name="Mayhew G.F."/>
            <person name="Evans P.S."/>
            <person name="Gregor J."/>
            <person name="Kirkpatrick H.A."/>
            <person name="Posfai G."/>
            <person name="Hackett J."/>
            <person name="Klink S."/>
            <person name="Boutin A."/>
            <person name="Shao Y."/>
            <person name="Miller L."/>
            <person name="Grotbeck E.J."/>
            <person name="Davis N.W."/>
            <person name="Lim A."/>
            <person name="Dimalanta E.T."/>
            <person name="Potamousis K."/>
            <person name="Apodaca J."/>
            <person name="Anantharaman T.S."/>
            <person name="Lin J."/>
            <person name="Yen G."/>
            <person name="Schwartz D.C."/>
            <person name="Welch R.A."/>
            <person name="Blattner F.R."/>
        </authorList>
    </citation>
    <scope>NUCLEOTIDE SEQUENCE [LARGE SCALE GENOMIC DNA]</scope>
    <source>
        <strain>O157:H7 / EDL933 / ATCC 700927 / EHEC</strain>
    </source>
</reference>
<reference key="2">
    <citation type="journal article" date="2001" name="DNA Res.">
        <title>Complete genome sequence of enterohemorrhagic Escherichia coli O157:H7 and genomic comparison with a laboratory strain K-12.</title>
        <authorList>
            <person name="Hayashi T."/>
            <person name="Makino K."/>
            <person name="Ohnishi M."/>
            <person name="Kurokawa K."/>
            <person name="Ishii K."/>
            <person name="Yokoyama K."/>
            <person name="Han C.-G."/>
            <person name="Ohtsubo E."/>
            <person name="Nakayama K."/>
            <person name="Murata T."/>
            <person name="Tanaka M."/>
            <person name="Tobe T."/>
            <person name="Iida T."/>
            <person name="Takami H."/>
            <person name="Honda T."/>
            <person name="Sasakawa C."/>
            <person name="Ogasawara N."/>
            <person name="Yasunaga T."/>
            <person name="Kuhara S."/>
            <person name="Shiba T."/>
            <person name="Hattori M."/>
            <person name="Shinagawa H."/>
        </authorList>
    </citation>
    <scope>NUCLEOTIDE SEQUENCE [LARGE SCALE GENOMIC DNA]</scope>
    <source>
        <strain>O157:H7 / Sakai / RIMD 0509952 / EHEC</strain>
    </source>
</reference>
<keyword id="KW-0963">Cytoplasm</keyword>
<keyword id="KW-0238">DNA-binding</keyword>
<keyword id="KW-0597">Phosphoprotein</keyword>
<keyword id="KW-1185">Reference proteome</keyword>
<keyword id="KW-0804">Transcription</keyword>
<keyword id="KW-0805">Transcription regulation</keyword>
<keyword id="KW-0902">Two-component regulatory system</keyword>
<evidence type="ECO:0000250" key="1"/>
<evidence type="ECO:0000250" key="2">
    <source>
        <dbReference type="UniProtKB" id="P0AE39"/>
    </source>
</evidence>
<evidence type="ECO:0000255" key="3">
    <source>
        <dbReference type="PROSITE-ProRule" id="PRU00112"/>
    </source>
</evidence>
<evidence type="ECO:0000255" key="4">
    <source>
        <dbReference type="PROSITE-ProRule" id="PRU00169"/>
    </source>
</evidence>